<dbReference type="EMBL" id="CP001052">
    <property type="protein sequence ID" value="ACD18011.1"/>
    <property type="molecule type" value="Genomic_DNA"/>
</dbReference>
<dbReference type="RefSeq" id="WP_012434566.1">
    <property type="nucleotide sequence ID" value="NC_010681.1"/>
</dbReference>
<dbReference type="SMR" id="B2T728"/>
<dbReference type="STRING" id="398527.Bphyt_3621"/>
<dbReference type="GeneID" id="97311015"/>
<dbReference type="KEGG" id="bpy:Bphyt_3621"/>
<dbReference type="eggNOG" id="COG0099">
    <property type="taxonomic scope" value="Bacteria"/>
</dbReference>
<dbReference type="HOGENOM" id="CLU_103849_1_2_4"/>
<dbReference type="OrthoDB" id="9803610at2"/>
<dbReference type="Proteomes" id="UP000001739">
    <property type="component" value="Chromosome 1"/>
</dbReference>
<dbReference type="GO" id="GO:0005829">
    <property type="term" value="C:cytosol"/>
    <property type="evidence" value="ECO:0007669"/>
    <property type="project" value="TreeGrafter"/>
</dbReference>
<dbReference type="GO" id="GO:0015935">
    <property type="term" value="C:small ribosomal subunit"/>
    <property type="evidence" value="ECO:0007669"/>
    <property type="project" value="TreeGrafter"/>
</dbReference>
<dbReference type="GO" id="GO:0019843">
    <property type="term" value="F:rRNA binding"/>
    <property type="evidence" value="ECO:0007669"/>
    <property type="project" value="UniProtKB-UniRule"/>
</dbReference>
<dbReference type="GO" id="GO:0003735">
    <property type="term" value="F:structural constituent of ribosome"/>
    <property type="evidence" value="ECO:0007669"/>
    <property type="project" value="InterPro"/>
</dbReference>
<dbReference type="GO" id="GO:0000049">
    <property type="term" value="F:tRNA binding"/>
    <property type="evidence" value="ECO:0007669"/>
    <property type="project" value="UniProtKB-UniRule"/>
</dbReference>
<dbReference type="GO" id="GO:0006412">
    <property type="term" value="P:translation"/>
    <property type="evidence" value="ECO:0007669"/>
    <property type="project" value="UniProtKB-UniRule"/>
</dbReference>
<dbReference type="FunFam" id="1.10.8.50:FF:000001">
    <property type="entry name" value="30S ribosomal protein S13"/>
    <property type="match status" value="1"/>
</dbReference>
<dbReference type="FunFam" id="4.10.910.10:FF:000001">
    <property type="entry name" value="30S ribosomal protein S13"/>
    <property type="match status" value="1"/>
</dbReference>
<dbReference type="Gene3D" id="1.10.8.50">
    <property type="match status" value="1"/>
</dbReference>
<dbReference type="Gene3D" id="4.10.910.10">
    <property type="entry name" value="30s ribosomal protein s13, domain 2"/>
    <property type="match status" value="1"/>
</dbReference>
<dbReference type="HAMAP" id="MF_01315">
    <property type="entry name" value="Ribosomal_uS13"/>
    <property type="match status" value="1"/>
</dbReference>
<dbReference type="InterPro" id="IPR027437">
    <property type="entry name" value="Rbsml_uS13_C"/>
</dbReference>
<dbReference type="InterPro" id="IPR001892">
    <property type="entry name" value="Ribosomal_uS13"/>
</dbReference>
<dbReference type="InterPro" id="IPR010979">
    <property type="entry name" value="Ribosomal_uS13-like_H2TH"/>
</dbReference>
<dbReference type="InterPro" id="IPR019980">
    <property type="entry name" value="Ribosomal_uS13_bac-type"/>
</dbReference>
<dbReference type="InterPro" id="IPR018269">
    <property type="entry name" value="Ribosomal_uS13_CS"/>
</dbReference>
<dbReference type="NCBIfam" id="TIGR03631">
    <property type="entry name" value="uS13_bact"/>
    <property type="match status" value="1"/>
</dbReference>
<dbReference type="PANTHER" id="PTHR10871">
    <property type="entry name" value="30S RIBOSOMAL PROTEIN S13/40S RIBOSOMAL PROTEIN S18"/>
    <property type="match status" value="1"/>
</dbReference>
<dbReference type="PANTHER" id="PTHR10871:SF1">
    <property type="entry name" value="SMALL RIBOSOMAL SUBUNIT PROTEIN US13M"/>
    <property type="match status" value="1"/>
</dbReference>
<dbReference type="Pfam" id="PF00416">
    <property type="entry name" value="Ribosomal_S13"/>
    <property type="match status" value="1"/>
</dbReference>
<dbReference type="PIRSF" id="PIRSF002134">
    <property type="entry name" value="Ribosomal_S13"/>
    <property type="match status" value="1"/>
</dbReference>
<dbReference type="SUPFAM" id="SSF46946">
    <property type="entry name" value="S13-like H2TH domain"/>
    <property type="match status" value="1"/>
</dbReference>
<dbReference type="PROSITE" id="PS00646">
    <property type="entry name" value="RIBOSOMAL_S13_1"/>
    <property type="match status" value="1"/>
</dbReference>
<dbReference type="PROSITE" id="PS50159">
    <property type="entry name" value="RIBOSOMAL_S13_2"/>
    <property type="match status" value="1"/>
</dbReference>
<organism>
    <name type="scientific">Paraburkholderia phytofirmans (strain DSM 17436 / LMG 22146 / PsJN)</name>
    <name type="common">Burkholderia phytofirmans</name>
    <dbReference type="NCBI Taxonomy" id="398527"/>
    <lineage>
        <taxon>Bacteria</taxon>
        <taxon>Pseudomonadati</taxon>
        <taxon>Pseudomonadota</taxon>
        <taxon>Betaproteobacteria</taxon>
        <taxon>Burkholderiales</taxon>
        <taxon>Burkholderiaceae</taxon>
        <taxon>Paraburkholderia</taxon>
    </lineage>
</organism>
<feature type="chain" id="PRO_1000141234" description="Small ribosomal subunit protein uS13">
    <location>
        <begin position="1"/>
        <end position="121"/>
    </location>
</feature>
<feature type="region of interest" description="Disordered" evidence="2">
    <location>
        <begin position="94"/>
        <end position="121"/>
    </location>
</feature>
<evidence type="ECO:0000255" key="1">
    <source>
        <dbReference type="HAMAP-Rule" id="MF_01315"/>
    </source>
</evidence>
<evidence type="ECO:0000256" key="2">
    <source>
        <dbReference type="SAM" id="MobiDB-lite"/>
    </source>
</evidence>
<evidence type="ECO:0000305" key="3"/>
<reference key="1">
    <citation type="journal article" date="2011" name="J. Bacteriol.">
        <title>Complete genome sequence of the plant growth-promoting endophyte Burkholderia phytofirmans strain PsJN.</title>
        <authorList>
            <person name="Weilharter A."/>
            <person name="Mitter B."/>
            <person name="Shin M.V."/>
            <person name="Chain P.S."/>
            <person name="Nowak J."/>
            <person name="Sessitsch A."/>
        </authorList>
    </citation>
    <scope>NUCLEOTIDE SEQUENCE [LARGE SCALE GENOMIC DNA]</scope>
    <source>
        <strain>DSM 17436 / LMG 22146 / PsJN</strain>
    </source>
</reference>
<gene>
    <name evidence="1" type="primary">rpsM</name>
    <name type="ordered locus">Bphyt_3621</name>
</gene>
<sequence length="121" mass="13637">MARIAGVNIPNHQHTEIGLTAIYGVGRTRSRDICVAAGVAFSKKVKDLNDADLEKLREEVGKFIVEGDLRRETTMNIKRLMDLGCYRGVRHRKGLPLRGQRTRTNARTRKGPRRAAQSLKK</sequence>
<comment type="function">
    <text evidence="1">Located at the top of the head of the 30S subunit, it contacts several helices of the 16S rRNA. In the 70S ribosome it contacts the 23S rRNA (bridge B1a) and protein L5 of the 50S subunit (bridge B1b), connecting the 2 subunits; these bridges are implicated in subunit movement. Contacts the tRNAs in the A and P-sites.</text>
</comment>
<comment type="subunit">
    <text evidence="1">Part of the 30S ribosomal subunit. Forms a loose heterodimer with protein S19. Forms two bridges to the 50S subunit in the 70S ribosome.</text>
</comment>
<comment type="similarity">
    <text evidence="1">Belongs to the universal ribosomal protein uS13 family.</text>
</comment>
<proteinExistence type="inferred from homology"/>
<name>RS13_PARPJ</name>
<accession>B2T728</accession>
<protein>
    <recommendedName>
        <fullName evidence="1">Small ribosomal subunit protein uS13</fullName>
    </recommendedName>
    <alternativeName>
        <fullName evidence="3">30S ribosomal protein S13</fullName>
    </alternativeName>
</protein>
<keyword id="KW-0687">Ribonucleoprotein</keyword>
<keyword id="KW-0689">Ribosomal protein</keyword>
<keyword id="KW-0694">RNA-binding</keyword>
<keyword id="KW-0699">rRNA-binding</keyword>
<keyword id="KW-0820">tRNA-binding</keyword>